<proteinExistence type="evidence at protein level"/>
<reference key="1">
    <citation type="journal article" date="1993" name="Am. J. Physiol.">
        <title>Sequence, tissue distribution, and functional characterization of the rat fructose transporter GLUT5.</title>
        <authorList>
            <person name="Rand E.B."/>
            <person name="Depaoli A.M."/>
            <person name="Davidson N.O."/>
            <person name="Bell G.I."/>
            <person name="Burant C.F."/>
        </authorList>
    </citation>
    <scope>NUCLEOTIDE SEQUENCE [MRNA]</scope>
    <scope>FUNCTION</scope>
    <scope>SUBCELLULAR LOCATION</scope>
    <scope>TISSUE SPECIFICITY</scope>
    <scope>DEVELOPMENTAL STAGE</scope>
    <scope>ACTIVITY REGULATION</scope>
    <source>
        <strain>Sprague-Dawley</strain>
        <tissue>Jejunum</tissue>
    </source>
</reference>
<reference key="2">
    <citation type="journal article" date="1993" name="Endocrinology">
        <title>Cloning and increased expression with fructose feeding of rat jejunal GLUT5.</title>
        <authorList>
            <person name="Inukai K."/>
            <person name="Asano T."/>
            <person name="Katagiri H."/>
            <person name="Ishihara H."/>
            <person name="Anai M."/>
            <person name="Fukushima Y."/>
            <person name="Tsukuda K."/>
            <person name="Kikuchi M."/>
            <person name="Yazaki Y."/>
            <person name="Oka Y."/>
        </authorList>
    </citation>
    <scope>NUCLEOTIDE SEQUENCE [MRNA]</scope>
    <scope>TISSUE SPECIFICITY</scope>
    <scope>INDUCTION BY FRUCTOSE</scope>
    <source>
        <strain>Sprague-Dawley</strain>
        <tissue>Jejunum</tissue>
    </source>
</reference>
<reference key="3">
    <citation type="submission" date="1994-02" db="EMBL/GenBank/DDBJ databases">
        <authorList>
            <person name="Kasahara T."/>
            <person name="Kasahara M."/>
        </authorList>
    </citation>
    <scope>NUCLEOTIDE SEQUENCE [MRNA]</scope>
    <source>
        <strain>Sprague-Dawley</strain>
        <tissue>Intestine</tissue>
    </source>
</reference>
<reference key="4">
    <citation type="journal article" date="2004" name="Genome Res.">
        <title>The status, quality, and expansion of the NIH full-length cDNA project: the Mammalian Gene Collection (MGC).</title>
        <authorList>
            <consortium name="The MGC Project Team"/>
        </authorList>
    </citation>
    <scope>NUCLEOTIDE SEQUENCE [LARGE SCALE MRNA]</scope>
    <source>
        <tissue>Kidney</tissue>
    </source>
</reference>
<reference key="5">
    <citation type="journal article" date="1998" name="Biochem. J.">
        <title>Biochemical and functional characterization of the GLUT5 fructose transporter in rat skeletal muscle.</title>
        <authorList>
            <person name="Darakhshan F."/>
            <person name="Hajduch E."/>
            <person name="Kristiansen S."/>
            <person name="Richter E.A."/>
            <person name="Hundal H.S."/>
        </authorList>
    </citation>
    <scope>FUNCTION</scope>
    <scope>SUBCELLULAR LOCATION</scope>
    <scope>ACTIVITY REGULATION</scope>
    <scope>TISSUE SPECIFICITY</scope>
    <scope>INDUCTION BY FRUCTOSE</scope>
</reference>
<reference evidence="11" key="6">
    <citation type="journal article" date="2015" name="Nature">
        <title>Structure and mechanism of the mammalian fructose transporter GLUT5.</title>
        <authorList>
            <person name="Nomura N."/>
            <person name="Verdon G."/>
            <person name="Kang H.J."/>
            <person name="Shimamura T."/>
            <person name="Nomura Y."/>
            <person name="Sonoda Y."/>
            <person name="Hussien S.A."/>
            <person name="Qureshi A.A."/>
            <person name="Coincon M."/>
            <person name="Sato Y."/>
            <person name="Abe H."/>
            <person name="Nakada-Nakura Y."/>
            <person name="Hino T."/>
            <person name="Arakawa T."/>
            <person name="Kusano-Arai O."/>
            <person name="Iwanari H."/>
            <person name="Murata T."/>
            <person name="Kobayashi T."/>
            <person name="Hamakubo T."/>
            <person name="Kasahara M."/>
            <person name="Iwata S."/>
            <person name="Drew D."/>
        </authorList>
    </citation>
    <scope>X-RAY CRYSTALLOGRAPHY (3.27 ANGSTROMS)</scope>
    <scope>FUNCTION</scope>
    <scope>TRANSPORTER ACTIVITY</scope>
    <scope>SUBCELLULAR LOCATION</scope>
    <scope>TOPOLOGY</scope>
    <scope>ACTIVITY REGULATION</scope>
    <scope>MUTAGENESIS OF GLN-166</scope>
</reference>
<keyword id="KW-0002">3D-structure</keyword>
<keyword id="KW-0007">Acetylation</keyword>
<keyword id="KW-1003">Cell membrane</keyword>
<keyword id="KW-0325">Glycoprotein</keyword>
<keyword id="KW-0472">Membrane</keyword>
<keyword id="KW-1185">Reference proteome</keyword>
<keyword id="KW-0762">Sugar transport</keyword>
<keyword id="KW-0812">Transmembrane</keyword>
<keyword id="KW-1133">Transmembrane helix</keyword>
<keyword id="KW-0813">Transport</keyword>
<evidence type="ECO:0000250" key="1">
    <source>
        <dbReference type="UniProtKB" id="P22732"/>
    </source>
</evidence>
<evidence type="ECO:0000250" key="2">
    <source>
        <dbReference type="UniProtKB" id="Q9WV38"/>
    </source>
</evidence>
<evidence type="ECO:0000255" key="3"/>
<evidence type="ECO:0000269" key="4">
    <source>
    </source>
</evidence>
<evidence type="ECO:0000269" key="5">
    <source>
    </source>
</evidence>
<evidence type="ECO:0000269" key="6">
    <source>
    </source>
</evidence>
<evidence type="ECO:0000269" key="7">
    <source>
    </source>
</evidence>
<evidence type="ECO:0000303" key="8">
    <source>
    </source>
</evidence>
<evidence type="ECO:0000305" key="9"/>
<evidence type="ECO:0000312" key="10">
    <source>
        <dbReference type="RGD" id="68328"/>
    </source>
</evidence>
<evidence type="ECO:0007744" key="11">
    <source>
        <dbReference type="PDB" id="4YBQ"/>
    </source>
</evidence>
<evidence type="ECO:0007829" key="12">
    <source>
        <dbReference type="PDB" id="4YBQ"/>
    </source>
</evidence>
<comment type="function">
    <text evidence="2 4 5 7">Functions as a fructose transporter that has only low activity with other monosaccharides (PubMed:26416735, PubMed:8333543, PubMed:9820812). Can mediate the uptake of deoxyglucose, but with low efficiency (PubMed:8333543). Essential for fructose uptake in the small intestine (By similarity). Plays a role in the regulation of salt uptake and blood pressure in response to dietary fructose (By similarity). Required for the development of high blood pressure in response to high dietary fructose intake (By similarity).</text>
</comment>
<comment type="catalytic activity">
    <reaction evidence="4">
        <text>D-fructose(out) = D-fructose(in)</text>
        <dbReference type="Rhea" id="RHEA:60372"/>
        <dbReference type="ChEBI" id="CHEBI:37721"/>
    </reaction>
</comment>
<comment type="activity regulation">
    <text evidence="4 5 7">Fructose uptake is inhibited by mercury ions (PubMed:26416735). Fructose uptake is only slightly inhibited by cytochalasin B (PubMed:8333543, PubMed:9820812).</text>
</comment>
<comment type="subcellular location">
    <subcellularLocation>
        <location evidence="2">Apical cell membrane</location>
        <topology evidence="2">Multi-pass membrane protein</topology>
    </subcellularLocation>
    <subcellularLocation>
        <location evidence="4 5 7">Cell membrane</location>
        <topology evidence="4">Multi-pass membrane protein</topology>
    </subcellularLocation>
    <subcellularLocation>
        <location evidence="7">Cell membrane</location>
        <location evidence="7">Sarcolemma</location>
    </subcellularLocation>
    <text evidence="2">Localized on the apical membrane of jejunum villi, but also on lateral plasma membranes of the villi. Transport to the cell membrane is dependent on RAB11A.</text>
</comment>
<comment type="tissue specificity">
    <text evidence="5 6 7">Detected in jejunum (PubMed:8404647, PubMed:9820812). Detected in kidney, skeletal muscle, brain and adipose tissue (at protein level) (PubMed:9820812). Detected in small intestine and in kidney, and at much lower levels in brain. Detected in enterocytes in duodenum, jejunum, and ileum (PubMed:8333543).</text>
</comment>
<comment type="developmental stage">
    <text evidence="5">Detected in small intestine during embryogenesis, but expression is much higher in adult.</text>
</comment>
<comment type="induction">
    <text evidence="6 7">Up-regulated in jejunum by a diet with a high fructose content (at protein level) (PubMed:8404647, PubMed:9820812). Up-regulated in kidney by a diet with a high fructose content (at protein level) (PubMed:9820812). Up-regulated in jejunum by a diet with a high fructose content (PubMed:8404647).</text>
</comment>
<comment type="similarity">
    <text evidence="9">Belongs to the major facilitator superfamily. Sugar transporter (TC 2.A.1.1) family. Glucose transporter subfamily.</text>
</comment>
<protein>
    <recommendedName>
        <fullName evidence="9">Solute carrier family 2, facilitated glucose transporter member 5</fullName>
    </recommendedName>
    <alternativeName>
        <fullName evidence="9">Fructose transporter</fullName>
    </alternativeName>
    <alternativeName>
        <fullName evidence="8">Glucose transporter type 5, small intestine</fullName>
        <shortName evidence="8">GLUT-5</shortName>
    </alternativeName>
</protein>
<feature type="chain" id="PRO_0000050372" description="Solute carrier family 2, facilitated glucose transporter member 5">
    <location>
        <begin position="1"/>
        <end position="502"/>
    </location>
</feature>
<feature type="topological domain" description="Cytoplasmic" evidence="4">
    <location>
        <begin position="1"/>
        <end position="17"/>
    </location>
</feature>
<feature type="transmembrane region" description="Helical; Name=1" evidence="4">
    <location>
        <begin position="18"/>
        <end position="38"/>
    </location>
</feature>
<feature type="topological domain" description="Extracellular" evidence="4">
    <location>
        <begin position="39"/>
        <end position="67"/>
    </location>
</feature>
<feature type="transmembrane region" description="Helical; Name=2" evidence="4">
    <location>
        <begin position="68"/>
        <end position="90"/>
    </location>
</feature>
<feature type="topological domain" description="Cytoplasmic" evidence="4">
    <location>
        <begin position="91"/>
        <end position="97"/>
    </location>
</feature>
<feature type="transmembrane region" description="Helical; Name=3" evidence="4">
    <location>
        <begin position="98"/>
        <end position="118"/>
    </location>
</feature>
<feature type="topological domain" description="Extracellular" evidence="4">
    <location>
        <begin position="119"/>
        <end position="125"/>
    </location>
</feature>
<feature type="transmembrane region" description="Helical; Name=4" evidence="4">
    <location>
        <begin position="126"/>
        <end position="148"/>
    </location>
</feature>
<feature type="topological domain" description="Cytoplasmic" evidence="4">
    <location>
        <begin position="149"/>
        <end position="160"/>
    </location>
</feature>
<feature type="transmembrane region" description="Helical; Name=5" evidence="4">
    <location>
        <begin position="161"/>
        <end position="181"/>
    </location>
</feature>
<feature type="topological domain" description="Extracellular" evidence="4">
    <location>
        <begin position="182"/>
        <end position="191"/>
    </location>
</feature>
<feature type="transmembrane region" description="Helical; Name=6" evidence="4">
    <location>
        <begin position="192"/>
        <end position="212"/>
    </location>
</feature>
<feature type="topological domain" description="Cytoplasmic" evidence="4">
    <location>
        <begin position="213"/>
        <end position="276"/>
    </location>
</feature>
<feature type="transmembrane region" description="Helical; Name=7" evidence="4">
    <location>
        <begin position="277"/>
        <end position="297"/>
    </location>
</feature>
<feature type="topological domain" description="Extracellular" evidence="4">
    <location>
        <begin position="298"/>
        <end position="312"/>
    </location>
</feature>
<feature type="transmembrane region" description="Helical; Name=8" evidence="4">
    <location>
        <begin position="313"/>
        <end position="333"/>
    </location>
</feature>
<feature type="topological domain" description="Cytoplasmic" evidence="4">
    <location>
        <begin position="334"/>
        <end position="341"/>
    </location>
</feature>
<feature type="transmembrane region" description="Helical; Name=9" evidence="4">
    <location>
        <begin position="342"/>
        <end position="362"/>
    </location>
</feature>
<feature type="topological domain" description="Extracellular" evidence="4">
    <location>
        <begin position="363"/>
        <end position="370"/>
    </location>
</feature>
<feature type="transmembrane region" description="Helical; Name=10" evidence="4">
    <location>
        <begin position="371"/>
        <end position="393"/>
    </location>
</feature>
<feature type="topological domain" description="Cytoplasmic" evidence="4">
    <location>
        <begin position="394"/>
        <end position="411"/>
    </location>
</feature>
<feature type="transmembrane region" description="Helical; Name=11" evidence="4">
    <location>
        <begin position="412"/>
        <end position="432"/>
    </location>
</feature>
<feature type="topological domain" description="Extracellular" evidence="4">
    <location>
        <begin position="433"/>
        <end position="438"/>
    </location>
</feature>
<feature type="transmembrane region" description="Helical; Name=12" evidence="4">
    <location>
        <begin position="439"/>
        <end position="459"/>
    </location>
</feature>
<feature type="topological domain" description="Cytoplasmic" evidence="4">
    <location>
        <begin position="460"/>
        <end position="502"/>
    </location>
</feature>
<feature type="binding site" evidence="4">
    <location>
        <position position="31"/>
    </location>
    <ligand>
        <name>D-fructose</name>
        <dbReference type="ChEBI" id="CHEBI:37721"/>
    </ligand>
</feature>
<feature type="binding site" evidence="4">
    <location>
        <position position="166"/>
    </location>
    <ligand>
        <name>D-fructose</name>
        <dbReference type="ChEBI" id="CHEBI:37721"/>
    </ligand>
</feature>
<feature type="binding site" evidence="4">
    <location>
        <position position="287"/>
    </location>
    <ligand>
        <name>D-fructose</name>
        <dbReference type="ChEBI" id="CHEBI:37721"/>
    </ligand>
</feature>
<feature type="binding site" evidence="4">
    <location>
        <begin position="295"/>
        <end position="297"/>
    </location>
    <ligand>
        <name>D-fructose</name>
        <dbReference type="ChEBI" id="CHEBI:37721"/>
    </ligand>
</feature>
<feature type="binding site" evidence="4">
    <location>
        <position position="386"/>
    </location>
    <ligand>
        <name>D-fructose</name>
        <dbReference type="ChEBI" id="CHEBI:37721"/>
    </ligand>
</feature>
<feature type="binding site" evidence="4">
    <location>
        <begin position="418"/>
        <end position="419"/>
    </location>
    <ligand>
        <name>D-fructose</name>
        <dbReference type="ChEBI" id="CHEBI:37721"/>
    </ligand>
</feature>
<feature type="modified residue" description="N-acetylmethionine" evidence="1">
    <location>
        <position position="1"/>
    </location>
</feature>
<feature type="glycosylation site" description="N-linked (GlcNAc...) asparagine" evidence="3">
    <location>
        <position position="50"/>
    </location>
</feature>
<feature type="mutagenesis site" description="Impairs D-fructose binding." evidence="4">
    <original>Q</original>
    <variation>E</variation>
    <location>
        <position position="166"/>
    </location>
</feature>
<feature type="sequence conflict" description="In Ref. 1; AAA02627." evidence="9" ref="1">
    <original>V</original>
    <variation>A</variation>
    <location>
        <position position="164"/>
    </location>
</feature>
<feature type="sequence conflict" description="In Ref. 2; BAA02983." evidence="9" ref="2">
    <original>A</original>
    <variation>T</variation>
    <location>
        <position position="285"/>
    </location>
</feature>
<feature type="sequence conflict" description="In Ref. 2; BAA02983." evidence="9" ref="2">
    <original>T</original>
    <variation>S</variation>
    <location>
        <position position="452"/>
    </location>
</feature>
<feature type="sequence conflict" description="In Ref. 1; AAA02627." evidence="9" ref="1">
    <original>K</original>
    <variation>N</variation>
    <location>
        <position position="479"/>
    </location>
</feature>
<feature type="helix" evidence="12">
    <location>
        <begin position="14"/>
        <end position="37"/>
    </location>
</feature>
<feature type="turn" evidence="12">
    <location>
        <begin position="41"/>
        <end position="43"/>
    </location>
</feature>
<feature type="helix" evidence="12">
    <location>
        <begin position="62"/>
        <end position="86"/>
    </location>
</feature>
<feature type="helix" evidence="12">
    <location>
        <begin position="88"/>
        <end position="120"/>
    </location>
</feature>
<feature type="helix" evidence="12">
    <location>
        <begin position="124"/>
        <end position="152"/>
    </location>
</feature>
<feature type="helix" evidence="12">
    <location>
        <begin position="155"/>
        <end position="186"/>
    </location>
</feature>
<feature type="helix" evidence="12">
    <location>
        <begin position="191"/>
        <end position="208"/>
    </location>
</feature>
<feature type="helix" evidence="12">
    <location>
        <begin position="209"/>
        <end position="211"/>
    </location>
</feature>
<feature type="helix" evidence="12">
    <location>
        <begin position="216"/>
        <end position="220"/>
    </location>
</feature>
<feature type="helix" evidence="12">
    <location>
        <begin position="226"/>
        <end position="237"/>
    </location>
</feature>
<feature type="strand" evidence="12">
    <location>
        <begin position="238"/>
        <end position="240"/>
    </location>
</feature>
<feature type="helix" evidence="12">
    <location>
        <begin position="243"/>
        <end position="257"/>
    </location>
</feature>
<feature type="helix" evidence="12">
    <location>
        <begin position="264"/>
        <end position="269"/>
    </location>
</feature>
<feature type="helix" evidence="12">
    <location>
        <begin position="274"/>
        <end position="288"/>
    </location>
</feature>
<feature type="helix" evidence="12">
    <location>
        <begin position="292"/>
        <end position="306"/>
    </location>
</feature>
<feature type="helix" evidence="12">
    <location>
        <begin position="310"/>
        <end position="338"/>
    </location>
</feature>
<feature type="helix" evidence="12">
    <location>
        <begin position="340"/>
        <end position="367"/>
    </location>
</feature>
<feature type="helix" evidence="12">
    <location>
        <begin position="371"/>
        <end position="388"/>
    </location>
</feature>
<feature type="turn" evidence="12">
    <location>
        <begin position="389"/>
        <end position="392"/>
    </location>
</feature>
<feature type="helix" evidence="12">
    <location>
        <begin position="393"/>
        <end position="401"/>
    </location>
</feature>
<feature type="turn" evidence="12">
    <location>
        <begin position="404"/>
        <end position="406"/>
    </location>
</feature>
<feature type="helix" evidence="12">
    <location>
        <begin position="407"/>
        <end position="436"/>
    </location>
</feature>
<feature type="helix" evidence="12">
    <location>
        <begin position="437"/>
        <end position="439"/>
    </location>
</feature>
<feature type="helix" evidence="12">
    <location>
        <begin position="440"/>
        <end position="457"/>
    </location>
</feature>
<feature type="helix" evidence="12">
    <location>
        <begin position="467"/>
        <end position="479"/>
    </location>
</feature>
<sequence length="502" mass="55543">MEKEDQEKTGKLTLVLALATFLAAFGSSFQYGYNVAAVNSPSEFMQQFYNDTYYDRNKENIESFTLTLLWSLTVSMFPFGGFIGSLMVGFLVNNLGRKGALLFNNIFSILPAILMGCSKIAKSFEIIIASRLLVGICAGISSNVVPMYLGELAPKNLRGALGVVPQLFITVGILVAQLFGLRSVLASEEGWPILLGLTGVPAGLQLLLLPFFPESPRYLLIQKKNESAAEKALQTLRGWKDVDMEMEEIRKEDEAEKAAGFISVWKLFRMQSLRWQLISTIVLMAGQQLSGVNAIYYYADQIYLSAGVKSNDVQYVTAGTGAVNVFMTMVTVFVVELWGRRNLLLIGFSTCLTACIVLTVALALQNTISWMPYVSIVCVIVYVIGHAVGPSPIPALFITEIFLQSSRPSAYMIGGSVHWLSNFIVGLIFPFIQVGLGPYSFIIFAIICLLTTIYIFMVVPETKGRTFVEINQIFAKKNKVSDVYPEKEEKELNDLPPATREQ</sequence>
<dbReference type="EMBL" id="L05195">
    <property type="protein sequence ID" value="AAA02627.1"/>
    <property type="molecule type" value="mRNA"/>
</dbReference>
<dbReference type="EMBL" id="D13871">
    <property type="protein sequence ID" value="BAA02983.1"/>
    <property type="molecule type" value="mRNA"/>
</dbReference>
<dbReference type="EMBL" id="D28562">
    <property type="protein sequence ID" value="BAA05912.1"/>
    <property type="molecule type" value="mRNA"/>
</dbReference>
<dbReference type="EMBL" id="BC076378">
    <property type="protein sequence ID" value="AAH76378.1"/>
    <property type="molecule type" value="mRNA"/>
</dbReference>
<dbReference type="PIR" id="I53268">
    <property type="entry name" value="I53268"/>
</dbReference>
<dbReference type="RefSeq" id="NP_113929.1">
    <property type="nucleotide sequence ID" value="NM_031741.1"/>
</dbReference>
<dbReference type="RefSeq" id="XP_063144438.1">
    <property type="nucleotide sequence ID" value="XM_063288368.1"/>
</dbReference>
<dbReference type="PDB" id="4YBQ">
    <property type="method" value="X-ray"/>
    <property type="resolution" value="3.27 A"/>
    <property type="chains" value="A/B=1-502"/>
</dbReference>
<dbReference type="PDBsum" id="4YBQ"/>
<dbReference type="SMR" id="P43427"/>
<dbReference type="FunCoup" id="P43427">
    <property type="interactions" value="72"/>
</dbReference>
<dbReference type="STRING" id="10116.ENSRNOP00000068562"/>
<dbReference type="GlyCosmos" id="P43427">
    <property type="glycosylation" value="1 site, No reported glycans"/>
</dbReference>
<dbReference type="GlyGen" id="P43427">
    <property type="glycosylation" value="2 sites"/>
</dbReference>
<dbReference type="PhosphoSitePlus" id="P43427"/>
<dbReference type="PaxDb" id="10116-ENSRNOP00000024054"/>
<dbReference type="ABCD" id="P43427">
    <property type="antibodies" value="1 sequenced antibody"/>
</dbReference>
<dbReference type="Ensembl" id="ENSRNOT00000024054.6">
    <property type="protein sequence ID" value="ENSRNOP00000024054.5"/>
    <property type="gene ID" value="ENSRNOG00000017693.8"/>
</dbReference>
<dbReference type="GeneID" id="65197"/>
<dbReference type="KEGG" id="rno:65197"/>
<dbReference type="UCSC" id="RGD:68328">
    <property type="organism name" value="rat"/>
</dbReference>
<dbReference type="AGR" id="RGD:68328"/>
<dbReference type="CTD" id="6518"/>
<dbReference type="RGD" id="68328">
    <property type="gene designation" value="Slc2a5"/>
</dbReference>
<dbReference type="eggNOG" id="KOG0569">
    <property type="taxonomic scope" value="Eukaryota"/>
</dbReference>
<dbReference type="GeneTree" id="ENSGT00940000156846"/>
<dbReference type="HOGENOM" id="CLU_001265_30_5_1"/>
<dbReference type="InParanoid" id="P43427"/>
<dbReference type="OrthoDB" id="65114at9989"/>
<dbReference type="Reactome" id="R-RNO-6798695">
    <property type="pathway name" value="Neutrophil degranulation"/>
</dbReference>
<dbReference type="Reactome" id="R-RNO-8981373">
    <property type="pathway name" value="Intestinal hexose absorption"/>
</dbReference>
<dbReference type="EvolutionaryTrace" id="P43427"/>
<dbReference type="PRO" id="PR:P43427"/>
<dbReference type="Proteomes" id="UP000002494">
    <property type="component" value="Chromosome 5"/>
</dbReference>
<dbReference type="Bgee" id="ENSRNOG00000017693">
    <property type="expression patterns" value="Expressed in jejunum and 17 other cell types or tissues"/>
</dbReference>
<dbReference type="ExpressionAtlas" id="P43427">
    <property type="expression patterns" value="baseline and differential"/>
</dbReference>
<dbReference type="GO" id="GO:0016324">
    <property type="term" value="C:apical plasma membrane"/>
    <property type="evidence" value="ECO:0000250"/>
    <property type="project" value="UniProtKB"/>
</dbReference>
<dbReference type="GO" id="GO:0005886">
    <property type="term" value="C:plasma membrane"/>
    <property type="evidence" value="ECO:0000314"/>
    <property type="project" value="UniProtKB"/>
</dbReference>
<dbReference type="GO" id="GO:0042383">
    <property type="term" value="C:sarcolemma"/>
    <property type="evidence" value="ECO:0000314"/>
    <property type="project" value="UniProtKB"/>
</dbReference>
<dbReference type="GO" id="GO:0055056">
    <property type="term" value="F:D-glucose transmembrane transporter activity"/>
    <property type="evidence" value="ECO:0000318"/>
    <property type="project" value="GO_Central"/>
</dbReference>
<dbReference type="GO" id="GO:0070061">
    <property type="term" value="F:fructose binding"/>
    <property type="evidence" value="ECO:0000314"/>
    <property type="project" value="UniProtKB"/>
</dbReference>
<dbReference type="GO" id="GO:0005353">
    <property type="term" value="F:fructose transmembrane transporter activity"/>
    <property type="evidence" value="ECO:0000314"/>
    <property type="project" value="UniProtKB"/>
</dbReference>
<dbReference type="GO" id="GO:0071332">
    <property type="term" value="P:cellular response to fructose stimulus"/>
    <property type="evidence" value="ECO:0000314"/>
    <property type="project" value="UniProtKB"/>
</dbReference>
<dbReference type="GO" id="GO:0046323">
    <property type="term" value="P:D-glucose import"/>
    <property type="evidence" value="ECO:0000318"/>
    <property type="project" value="GO_Central"/>
</dbReference>
<dbReference type="GO" id="GO:1904659">
    <property type="term" value="P:D-glucose transmembrane transport"/>
    <property type="evidence" value="ECO:0000314"/>
    <property type="project" value="RGD"/>
</dbReference>
<dbReference type="GO" id="GO:0070837">
    <property type="term" value="P:dehydroascorbic acid transport"/>
    <property type="evidence" value="ECO:0000318"/>
    <property type="project" value="GO_Central"/>
</dbReference>
<dbReference type="GO" id="GO:1990539">
    <property type="term" value="P:fructose import across plasma membrane"/>
    <property type="evidence" value="ECO:0000314"/>
    <property type="project" value="UniProtKB"/>
</dbReference>
<dbReference type="GO" id="GO:0015755">
    <property type="term" value="P:fructose transmembrane transport"/>
    <property type="evidence" value="ECO:0000314"/>
    <property type="project" value="RGD"/>
</dbReference>
<dbReference type="GO" id="GO:0072237">
    <property type="term" value="P:metanephric proximal tubule development"/>
    <property type="evidence" value="ECO:0000270"/>
    <property type="project" value="RGD"/>
</dbReference>
<dbReference type="GO" id="GO:0003044">
    <property type="term" value="P:regulation of systemic arterial blood pressure mediated by a chemical signal"/>
    <property type="evidence" value="ECO:0000250"/>
    <property type="project" value="UniProtKB"/>
</dbReference>
<dbReference type="GO" id="GO:0009750">
    <property type="term" value="P:response to fructose"/>
    <property type="evidence" value="ECO:0000266"/>
    <property type="project" value="RGD"/>
</dbReference>
<dbReference type="CDD" id="cd17432">
    <property type="entry name" value="MFS_GLUT_Class2"/>
    <property type="match status" value="1"/>
</dbReference>
<dbReference type="FunFam" id="1.20.1250.20:FF:001511">
    <property type="entry name" value="Solute carrier family 2, facilitated glucose transporter member 5"/>
    <property type="match status" value="1"/>
</dbReference>
<dbReference type="Gene3D" id="1.20.1250.20">
    <property type="entry name" value="MFS general substrate transporter like domains"/>
    <property type="match status" value="1"/>
</dbReference>
<dbReference type="InterPro" id="IPR002442">
    <property type="entry name" value="Fru_transpt_5"/>
</dbReference>
<dbReference type="InterPro" id="IPR045263">
    <property type="entry name" value="GLUT"/>
</dbReference>
<dbReference type="InterPro" id="IPR020846">
    <property type="entry name" value="MFS_dom"/>
</dbReference>
<dbReference type="InterPro" id="IPR005828">
    <property type="entry name" value="MFS_sugar_transport-like"/>
</dbReference>
<dbReference type="InterPro" id="IPR036259">
    <property type="entry name" value="MFS_trans_sf"/>
</dbReference>
<dbReference type="InterPro" id="IPR003663">
    <property type="entry name" value="Sugar/inositol_transpt"/>
</dbReference>
<dbReference type="InterPro" id="IPR005829">
    <property type="entry name" value="Sugar_transporter_CS"/>
</dbReference>
<dbReference type="NCBIfam" id="TIGR00879">
    <property type="entry name" value="SP"/>
    <property type="match status" value="1"/>
</dbReference>
<dbReference type="PANTHER" id="PTHR23503">
    <property type="entry name" value="SOLUTE CARRIER FAMILY 2"/>
    <property type="match status" value="1"/>
</dbReference>
<dbReference type="PANTHER" id="PTHR23503:SF32">
    <property type="entry name" value="SOLUTE CARRIER FAMILY 2, FACILITATED GLUCOSE TRANSPORTER MEMBER 5"/>
    <property type="match status" value="1"/>
</dbReference>
<dbReference type="Pfam" id="PF00083">
    <property type="entry name" value="Sugar_tr"/>
    <property type="match status" value="1"/>
</dbReference>
<dbReference type="PRINTS" id="PR01194">
    <property type="entry name" value="GLUCTRSPORT5"/>
</dbReference>
<dbReference type="PRINTS" id="PR00171">
    <property type="entry name" value="SUGRTRNSPORT"/>
</dbReference>
<dbReference type="SUPFAM" id="SSF103473">
    <property type="entry name" value="MFS general substrate transporter"/>
    <property type="match status" value="1"/>
</dbReference>
<dbReference type="PROSITE" id="PS50850">
    <property type="entry name" value="MFS"/>
    <property type="match status" value="1"/>
</dbReference>
<dbReference type="PROSITE" id="PS00216">
    <property type="entry name" value="SUGAR_TRANSPORT_1"/>
    <property type="match status" value="1"/>
</dbReference>
<dbReference type="PROSITE" id="PS00217">
    <property type="entry name" value="SUGAR_TRANSPORT_2"/>
    <property type="match status" value="1"/>
</dbReference>
<organism>
    <name type="scientific">Rattus norvegicus</name>
    <name type="common">Rat</name>
    <dbReference type="NCBI Taxonomy" id="10116"/>
    <lineage>
        <taxon>Eukaryota</taxon>
        <taxon>Metazoa</taxon>
        <taxon>Chordata</taxon>
        <taxon>Craniata</taxon>
        <taxon>Vertebrata</taxon>
        <taxon>Euteleostomi</taxon>
        <taxon>Mammalia</taxon>
        <taxon>Eutheria</taxon>
        <taxon>Euarchontoglires</taxon>
        <taxon>Glires</taxon>
        <taxon>Rodentia</taxon>
        <taxon>Myomorpha</taxon>
        <taxon>Muroidea</taxon>
        <taxon>Muridae</taxon>
        <taxon>Murinae</taxon>
        <taxon>Rattus</taxon>
    </lineage>
</organism>
<gene>
    <name evidence="10" type="primary">Slc2a5</name>
    <name evidence="8" type="synonym">Glut5</name>
</gene>
<name>GTR5_RAT</name>
<accession>P43427</accession>